<reference key="1">
    <citation type="journal article" date="2002" name="DNA Res.">
        <title>Complete genomic sequence of nitrogen-fixing symbiotic bacterium Bradyrhizobium japonicum USDA110.</title>
        <authorList>
            <person name="Kaneko T."/>
            <person name="Nakamura Y."/>
            <person name="Sato S."/>
            <person name="Minamisawa K."/>
            <person name="Uchiumi T."/>
            <person name="Sasamoto S."/>
            <person name="Watanabe A."/>
            <person name="Idesawa K."/>
            <person name="Iriguchi M."/>
            <person name="Kawashima K."/>
            <person name="Kohara M."/>
            <person name="Matsumoto M."/>
            <person name="Shimpo S."/>
            <person name="Tsuruoka H."/>
            <person name="Wada T."/>
            <person name="Yamada M."/>
            <person name="Tabata S."/>
        </authorList>
    </citation>
    <scope>NUCLEOTIDE SEQUENCE [LARGE SCALE GENOMIC DNA]</scope>
    <source>
        <strain>JCM 10833 / BCRC 13528 / IAM 13628 / NBRC 14792 / USDA 110</strain>
    </source>
</reference>
<dbReference type="EC" id="2.5.1.7" evidence="1"/>
<dbReference type="EMBL" id="BA000040">
    <property type="protein sequence ID" value="BAC46087.1"/>
    <property type="molecule type" value="Genomic_DNA"/>
</dbReference>
<dbReference type="RefSeq" id="NP_767462.1">
    <property type="nucleotide sequence ID" value="NC_004463.1"/>
</dbReference>
<dbReference type="RefSeq" id="WP_011083644.1">
    <property type="nucleotide sequence ID" value="NC_004463.1"/>
</dbReference>
<dbReference type="SMR" id="Q89W71"/>
<dbReference type="FunCoup" id="Q89W71">
    <property type="interactions" value="545"/>
</dbReference>
<dbReference type="STRING" id="224911.AAV28_00950"/>
<dbReference type="EnsemblBacteria" id="BAC46087">
    <property type="protein sequence ID" value="BAC46087"/>
    <property type="gene ID" value="BAC46087"/>
</dbReference>
<dbReference type="GeneID" id="46488095"/>
<dbReference type="KEGG" id="bja:bll0822"/>
<dbReference type="PATRIC" id="fig|224911.44.peg.199"/>
<dbReference type="eggNOG" id="COG0766">
    <property type="taxonomic scope" value="Bacteria"/>
</dbReference>
<dbReference type="HOGENOM" id="CLU_027387_0_1_5"/>
<dbReference type="InParanoid" id="Q89W71"/>
<dbReference type="OrthoDB" id="9803760at2"/>
<dbReference type="PhylomeDB" id="Q89W71"/>
<dbReference type="UniPathway" id="UPA00219"/>
<dbReference type="Proteomes" id="UP000002526">
    <property type="component" value="Chromosome"/>
</dbReference>
<dbReference type="GO" id="GO:0005737">
    <property type="term" value="C:cytoplasm"/>
    <property type="evidence" value="ECO:0007669"/>
    <property type="project" value="UniProtKB-SubCell"/>
</dbReference>
<dbReference type="GO" id="GO:0008760">
    <property type="term" value="F:UDP-N-acetylglucosamine 1-carboxyvinyltransferase activity"/>
    <property type="evidence" value="ECO:0000318"/>
    <property type="project" value="GO_Central"/>
</dbReference>
<dbReference type="GO" id="GO:0051301">
    <property type="term" value="P:cell division"/>
    <property type="evidence" value="ECO:0007669"/>
    <property type="project" value="UniProtKB-KW"/>
</dbReference>
<dbReference type="GO" id="GO:0071555">
    <property type="term" value="P:cell wall organization"/>
    <property type="evidence" value="ECO:0007669"/>
    <property type="project" value="UniProtKB-KW"/>
</dbReference>
<dbReference type="GO" id="GO:0009252">
    <property type="term" value="P:peptidoglycan biosynthetic process"/>
    <property type="evidence" value="ECO:0000318"/>
    <property type="project" value="GO_Central"/>
</dbReference>
<dbReference type="GO" id="GO:0008360">
    <property type="term" value="P:regulation of cell shape"/>
    <property type="evidence" value="ECO:0007669"/>
    <property type="project" value="UniProtKB-KW"/>
</dbReference>
<dbReference type="GO" id="GO:0019277">
    <property type="term" value="P:UDP-N-acetylgalactosamine biosynthetic process"/>
    <property type="evidence" value="ECO:0007669"/>
    <property type="project" value="InterPro"/>
</dbReference>
<dbReference type="CDD" id="cd01555">
    <property type="entry name" value="UdpNAET"/>
    <property type="match status" value="1"/>
</dbReference>
<dbReference type="FunFam" id="3.65.10.10:FF:000014">
    <property type="entry name" value="UDP-N-acetylglucosamine 1-carboxyvinyltransferase"/>
    <property type="match status" value="1"/>
</dbReference>
<dbReference type="Gene3D" id="3.65.10.10">
    <property type="entry name" value="Enolpyruvate transferase domain"/>
    <property type="match status" value="2"/>
</dbReference>
<dbReference type="HAMAP" id="MF_00111">
    <property type="entry name" value="MurA"/>
    <property type="match status" value="1"/>
</dbReference>
<dbReference type="InterPro" id="IPR001986">
    <property type="entry name" value="Enolpyruvate_Tfrase_dom"/>
</dbReference>
<dbReference type="InterPro" id="IPR036968">
    <property type="entry name" value="Enolpyruvate_Tfrase_sf"/>
</dbReference>
<dbReference type="InterPro" id="IPR050068">
    <property type="entry name" value="MurA_subfamily"/>
</dbReference>
<dbReference type="InterPro" id="IPR013792">
    <property type="entry name" value="RNA3'P_cycl/enolpyr_Trfase_a/b"/>
</dbReference>
<dbReference type="InterPro" id="IPR005750">
    <property type="entry name" value="UDP_GlcNAc_COvinyl_MurA"/>
</dbReference>
<dbReference type="NCBIfam" id="TIGR01072">
    <property type="entry name" value="murA"/>
    <property type="match status" value="1"/>
</dbReference>
<dbReference type="NCBIfam" id="NF006873">
    <property type="entry name" value="PRK09369.1"/>
    <property type="match status" value="1"/>
</dbReference>
<dbReference type="PANTHER" id="PTHR43783">
    <property type="entry name" value="UDP-N-ACETYLGLUCOSAMINE 1-CARBOXYVINYLTRANSFERASE"/>
    <property type="match status" value="1"/>
</dbReference>
<dbReference type="PANTHER" id="PTHR43783:SF1">
    <property type="entry name" value="UDP-N-ACETYLGLUCOSAMINE 1-CARBOXYVINYLTRANSFERASE"/>
    <property type="match status" value="1"/>
</dbReference>
<dbReference type="Pfam" id="PF00275">
    <property type="entry name" value="EPSP_synthase"/>
    <property type="match status" value="1"/>
</dbReference>
<dbReference type="SUPFAM" id="SSF55205">
    <property type="entry name" value="EPT/RTPC-like"/>
    <property type="match status" value="1"/>
</dbReference>
<proteinExistence type="inferred from homology"/>
<accession>Q89W71</accession>
<name>MURA_BRADU</name>
<protein>
    <recommendedName>
        <fullName evidence="1">UDP-N-acetylglucosamine 1-carboxyvinyltransferase</fullName>
        <ecNumber evidence="1">2.5.1.7</ecNumber>
    </recommendedName>
    <alternativeName>
        <fullName evidence="1">Enoylpyruvate transferase</fullName>
    </alternativeName>
    <alternativeName>
        <fullName evidence="1">UDP-N-acetylglucosamine enolpyruvyl transferase</fullName>
        <shortName evidence="1">EPT</shortName>
    </alternativeName>
</protein>
<evidence type="ECO:0000255" key="1">
    <source>
        <dbReference type="HAMAP-Rule" id="MF_00111"/>
    </source>
</evidence>
<gene>
    <name evidence="1" type="primary">murA</name>
    <name type="ordered locus">bll0822</name>
</gene>
<sequence length="431" mass="46400">MAPIQYIVEGGHRLSGSIEPSGNKNSALPIIAAALLTEHPVTLENVPRIRDTETLVELIRSVGAAAEWTARNTLHIHAKSIRAADLDPELCVRIRASILLAGPLLARCGEVMLPPPGGDVIGRRRLDTHVLALEQLGAKVTATDRLEFRAPKLAGADVFLDEPSVTATENALVAAVAADGVTYLRNAASEPHVQDLANFLVALGAKIEGIGTNTMIIHGPATLGEATYRIQPDHIEVGSLIGLAAVTRSPLRIVRAGVEHLRSIRMGFERLGIVCRVEGDDLIVPSNQTLKIQDDFGGHVPKLEDQPWPAFPADLMSIAIVTATQCEGVILMFEKMFESRMFFVDKLIAMGARIVLCDPHRAIIAGPSRLRGAPMTSPDIRAGMAMLLAAVCAEGTSTINNADQIERGYERIEERLNALGAKIKRVPERKS</sequence>
<comment type="function">
    <text evidence="1">Cell wall formation. Adds enolpyruvyl to UDP-N-acetylglucosamine.</text>
</comment>
<comment type="catalytic activity">
    <reaction evidence="1">
        <text>phosphoenolpyruvate + UDP-N-acetyl-alpha-D-glucosamine = UDP-N-acetyl-3-O-(1-carboxyvinyl)-alpha-D-glucosamine + phosphate</text>
        <dbReference type="Rhea" id="RHEA:18681"/>
        <dbReference type="ChEBI" id="CHEBI:43474"/>
        <dbReference type="ChEBI" id="CHEBI:57705"/>
        <dbReference type="ChEBI" id="CHEBI:58702"/>
        <dbReference type="ChEBI" id="CHEBI:68483"/>
        <dbReference type="EC" id="2.5.1.7"/>
    </reaction>
</comment>
<comment type="pathway">
    <text evidence="1">Cell wall biogenesis; peptidoglycan biosynthesis.</text>
</comment>
<comment type="subcellular location">
    <subcellularLocation>
        <location evidence="1">Cytoplasm</location>
    </subcellularLocation>
</comment>
<comment type="similarity">
    <text evidence="1">Belongs to the EPSP synthase family. MurA subfamily.</text>
</comment>
<organism>
    <name type="scientific">Bradyrhizobium diazoefficiens (strain JCM 10833 / BCRC 13528 / IAM 13628 / NBRC 14792 / USDA 110)</name>
    <dbReference type="NCBI Taxonomy" id="224911"/>
    <lineage>
        <taxon>Bacteria</taxon>
        <taxon>Pseudomonadati</taxon>
        <taxon>Pseudomonadota</taxon>
        <taxon>Alphaproteobacteria</taxon>
        <taxon>Hyphomicrobiales</taxon>
        <taxon>Nitrobacteraceae</taxon>
        <taxon>Bradyrhizobium</taxon>
    </lineage>
</organism>
<feature type="chain" id="PRO_0000231178" description="UDP-N-acetylglucosamine 1-carboxyvinyltransferase">
    <location>
        <begin position="1"/>
        <end position="431"/>
    </location>
</feature>
<feature type="active site" description="Proton donor" evidence="1">
    <location>
        <position position="119"/>
    </location>
</feature>
<feature type="binding site" evidence="1">
    <location>
        <begin position="24"/>
        <end position="25"/>
    </location>
    <ligand>
        <name>phosphoenolpyruvate</name>
        <dbReference type="ChEBI" id="CHEBI:58702"/>
    </ligand>
</feature>
<feature type="binding site" evidence="1">
    <location>
        <position position="95"/>
    </location>
    <ligand>
        <name>UDP-N-acetyl-alpha-D-glucosamine</name>
        <dbReference type="ChEBI" id="CHEBI:57705"/>
    </ligand>
</feature>
<feature type="binding site" evidence="1">
    <location>
        <position position="314"/>
    </location>
    <ligand>
        <name>UDP-N-acetyl-alpha-D-glucosamine</name>
        <dbReference type="ChEBI" id="CHEBI:57705"/>
    </ligand>
</feature>
<feature type="binding site" evidence="1">
    <location>
        <position position="336"/>
    </location>
    <ligand>
        <name>UDP-N-acetyl-alpha-D-glucosamine</name>
        <dbReference type="ChEBI" id="CHEBI:57705"/>
    </ligand>
</feature>
<keyword id="KW-0131">Cell cycle</keyword>
<keyword id="KW-0132">Cell division</keyword>
<keyword id="KW-0133">Cell shape</keyword>
<keyword id="KW-0961">Cell wall biogenesis/degradation</keyword>
<keyword id="KW-0963">Cytoplasm</keyword>
<keyword id="KW-0573">Peptidoglycan synthesis</keyword>
<keyword id="KW-1185">Reference proteome</keyword>
<keyword id="KW-0808">Transferase</keyword>